<organism>
    <name type="scientific">Haemophilus influenzae (strain PittGG)</name>
    <dbReference type="NCBI Taxonomy" id="374931"/>
    <lineage>
        <taxon>Bacteria</taxon>
        <taxon>Pseudomonadati</taxon>
        <taxon>Pseudomonadota</taxon>
        <taxon>Gammaproteobacteria</taxon>
        <taxon>Pasteurellales</taxon>
        <taxon>Pasteurellaceae</taxon>
        <taxon>Haemophilus</taxon>
    </lineage>
</organism>
<sequence length="941" mass="106490">MTVDYKNTLNLPETSFPMRGDLAKREPDMLKNWYEKNLYQKIRKASKGKKSFILHDGPPYANGNIHIGHAVNKILKDIIIKSKTALGFDSPYIPGWDCHGLPIELKVEGLVGKPNEKISAAEFRQKCREYAAEQVEGQKKDFIRLGVLGDWDNPYLTMNFDTEANIIRTLGKVIENGHLYKGSKPVHWCLDCGSSLAEAEVEYEDKVSPSIYVRFPAESADEIEAKFSAQGRGQGKLSAIIWTTTPWTMPSNRAIAVNADLEYNLVQLGDERVILAAELVESVAKAVGIEHIEILGSVKGDDLELSRFHHPFYDFTVPVILGDHVTTDGGTGLVHTAPDHGLDDFIVGKQYDLPMAGLVSNDGKFISTTEFFAGKGVFEANPLVIEKLQEVGNLLKVEKIKHSYPHCWRHKTPIIFRATPQWFIGMETQGLRQQALGEIKQVRWIPDWGQARIEKMVENRPDWCISRQRTWGVPMTLFVHKETEELHPRTLDLLEEVAKRVERAGIQAWWDLDEKELLGADAETYRKVPDTLDVWFDSGSTYSSVVANRPEFNGQNIDMYLEGSDQHRGWFMSSLMLSTATDSKAPYKQVLTHGFTVDGQGRKMSKSIGNIVTPQEVMDKFGGDILRLWVASTDYTGEMTVSDEILKRAADSYRRIRNTARFLLANLNGFDPKRDLVKPEEMVSLDRWAVACALDAQNEIKDAYDNYQFHTVVQRLMRFCSVEMGSFYLDIIKDRQYTTKADSLARRSCQTALWHIAEALVRWMAPILSFTADEIWQHLPQTESARAEFVFTEEFYQGLFGLGEDEKLDDAYWQQLIKVRSEVNRVLEISRNNKEIGGGLEAEVTVYANDEYRALLAQLGNELRFVLITSKVDIKSLSEKPADLADSELEGIAVSVTRSNAEKCPRCWHYSDEIGVSPEHPTLCARCVENVVGNGEVRHFA</sequence>
<gene>
    <name evidence="1" type="primary">ileS</name>
    <name type="ordered locus">CGSHiGG_08385</name>
</gene>
<keyword id="KW-0030">Aminoacyl-tRNA synthetase</keyword>
<keyword id="KW-0067">ATP-binding</keyword>
<keyword id="KW-0963">Cytoplasm</keyword>
<keyword id="KW-0436">Ligase</keyword>
<keyword id="KW-0479">Metal-binding</keyword>
<keyword id="KW-0547">Nucleotide-binding</keyword>
<keyword id="KW-0648">Protein biosynthesis</keyword>
<keyword id="KW-0862">Zinc</keyword>
<accession>A5UIA3</accession>
<comment type="function">
    <text evidence="1">Catalyzes the attachment of isoleucine to tRNA(Ile). As IleRS can inadvertently accommodate and process structurally similar amino acids such as valine, to avoid such errors it has two additional distinct tRNA(Ile)-dependent editing activities. One activity is designated as 'pretransfer' editing and involves the hydrolysis of activated Val-AMP. The other activity is designated 'posttransfer' editing and involves deacylation of mischarged Val-tRNA(Ile).</text>
</comment>
<comment type="catalytic activity">
    <reaction evidence="1">
        <text>tRNA(Ile) + L-isoleucine + ATP = L-isoleucyl-tRNA(Ile) + AMP + diphosphate</text>
        <dbReference type="Rhea" id="RHEA:11060"/>
        <dbReference type="Rhea" id="RHEA-COMP:9666"/>
        <dbReference type="Rhea" id="RHEA-COMP:9695"/>
        <dbReference type="ChEBI" id="CHEBI:30616"/>
        <dbReference type="ChEBI" id="CHEBI:33019"/>
        <dbReference type="ChEBI" id="CHEBI:58045"/>
        <dbReference type="ChEBI" id="CHEBI:78442"/>
        <dbReference type="ChEBI" id="CHEBI:78528"/>
        <dbReference type="ChEBI" id="CHEBI:456215"/>
        <dbReference type="EC" id="6.1.1.5"/>
    </reaction>
</comment>
<comment type="cofactor">
    <cofactor evidence="1">
        <name>Zn(2+)</name>
        <dbReference type="ChEBI" id="CHEBI:29105"/>
    </cofactor>
    <text evidence="1">Binds 1 zinc ion per subunit.</text>
</comment>
<comment type="subunit">
    <text evidence="1">Monomer.</text>
</comment>
<comment type="subcellular location">
    <subcellularLocation>
        <location evidence="1">Cytoplasm</location>
    </subcellularLocation>
</comment>
<comment type="domain">
    <text evidence="1">IleRS has two distinct active sites: one for aminoacylation and one for editing. The misactivated valine is translocated from the active site to the editing site, which sterically excludes the correctly activated isoleucine. The single editing site contains two valyl binding pockets, one specific for each substrate (Val-AMP or Val-tRNA(Ile)).</text>
</comment>
<comment type="similarity">
    <text evidence="1">Belongs to the class-I aminoacyl-tRNA synthetase family. IleS type 1 subfamily.</text>
</comment>
<name>SYI_HAEIG</name>
<proteinExistence type="inferred from homology"/>
<reference key="1">
    <citation type="journal article" date="2007" name="Genome Biol.">
        <title>Characterization and modeling of the Haemophilus influenzae core and supragenomes based on the complete genomic sequences of Rd and 12 clinical nontypeable strains.</title>
        <authorList>
            <person name="Hogg J.S."/>
            <person name="Hu F.Z."/>
            <person name="Janto B."/>
            <person name="Boissy R."/>
            <person name="Hayes J."/>
            <person name="Keefe R."/>
            <person name="Post J.C."/>
            <person name="Ehrlich G.D."/>
        </authorList>
    </citation>
    <scope>NUCLEOTIDE SEQUENCE [LARGE SCALE GENOMIC DNA]</scope>
    <source>
        <strain>PittGG</strain>
    </source>
</reference>
<protein>
    <recommendedName>
        <fullName evidence="1">Isoleucine--tRNA ligase</fullName>
        <ecNumber evidence="1">6.1.1.5</ecNumber>
    </recommendedName>
    <alternativeName>
        <fullName evidence="1">Isoleucyl-tRNA synthetase</fullName>
        <shortName evidence="1">IleRS</shortName>
    </alternativeName>
</protein>
<feature type="chain" id="PRO_1000022073" description="Isoleucine--tRNA ligase">
    <location>
        <begin position="1"/>
        <end position="941"/>
    </location>
</feature>
<feature type="short sequence motif" description="'HIGH' region">
    <location>
        <begin position="59"/>
        <end position="69"/>
    </location>
</feature>
<feature type="short sequence motif" description="'KMSKS' region">
    <location>
        <begin position="603"/>
        <end position="607"/>
    </location>
</feature>
<feature type="binding site" evidence="1">
    <location>
        <position position="562"/>
    </location>
    <ligand>
        <name>L-isoleucyl-5'-AMP</name>
        <dbReference type="ChEBI" id="CHEBI:178002"/>
    </ligand>
</feature>
<feature type="binding site" evidence="1">
    <location>
        <position position="606"/>
    </location>
    <ligand>
        <name>ATP</name>
        <dbReference type="ChEBI" id="CHEBI:30616"/>
    </ligand>
</feature>
<feature type="binding site" evidence="1">
    <location>
        <position position="904"/>
    </location>
    <ligand>
        <name>Zn(2+)</name>
        <dbReference type="ChEBI" id="CHEBI:29105"/>
    </ligand>
</feature>
<feature type="binding site" evidence="1">
    <location>
        <position position="907"/>
    </location>
    <ligand>
        <name>Zn(2+)</name>
        <dbReference type="ChEBI" id="CHEBI:29105"/>
    </ligand>
</feature>
<feature type="binding site" evidence="1">
    <location>
        <position position="924"/>
    </location>
    <ligand>
        <name>Zn(2+)</name>
        <dbReference type="ChEBI" id="CHEBI:29105"/>
    </ligand>
</feature>
<feature type="binding site" evidence="1">
    <location>
        <position position="927"/>
    </location>
    <ligand>
        <name>Zn(2+)</name>
        <dbReference type="ChEBI" id="CHEBI:29105"/>
    </ligand>
</feature>
<evidence type="ECO:0000255" key="1">
    <source>
        <dbReference type="HAMAP-Rule" id="MF_02002"/>
    </source>
</evidence>
<dbReference type="EC" id="6.1.1.5" evidence="1"/>
<dbReference type="EMBL" id="CP000672">
    <property type="protein sequence ID" value="ABR00509.1"/>
    <property type="molecule type" value="Genomic_DNA"/>
</dbReference>
<dbReference type="SMR" id="A5UIA3"/>
<dbReference type="KEGG" id="hiq:CGSHiGG_08385"/>
<dbReference type="HOGENOM" id="CLU_001493_7_1_6"/>
<dbReference type="Proteomes" id="UP000001990">
    <property type="component" value="Chromosome"/>
</dbReference>
<dbReference type="GO" id="GO:0005829">
    <property type="term" value="C:cytosol"/>
    <property type="evidence" value="ECO:0007669"/>
    <property type="project" value="TreeGrafter"/>
</dbReference>
<dbReference type="GO" id="GO:0002161">
    <property type="term" value="F:aminoacyl-tRNA deacylase activity"/>
    <property type="evidence" value="ECO:0007669"/>
    <property type="project" value="InterPro"/>
</dbReference>
<dbReference type="GO" id="GO:0005524">
    <property type="term" value="F:ATP binding"/>
    <property type="evidence" value="ECO:0007669"/>
    <property type="project" value="UniProtKB-UniRule"/>
</dbReference>
<dbReference type="GO" id="GO:0004822">
    <property type="term" value="F:isoleucine-tRNA ligase activity"/>
    <property type="evidence" value="ECO:0007669"/>
    <property type="project" value="UniProtKB-UniRule"/>
</dbReference>
<dbReference type="GO" id="GO:0000049">
    <property type="term" value="F:tRNA binding"/>
    <property type="evidence" value="ECO:0007669"/>
    <property type="project" value="InterPro"/>
</dbReference>
<dbReference type="GO" id="GO:0008270">
    <property type="term" value="F:zinc ion binding"/>
    <property type="evidence" value="ECO:0007669"/>
    <property type="project" value="UniProtKB-UniRule"/>
</dbReference>
<dbReference type="GO" id="GO:0006428">
    <property type="term" value="P:isoleucyl-tRNA aminoacylation"/>
    <property type="evidence" value="ECO:0007669"/>
    <property type="project" value="UniProtKB-UniRule"/>
</dbReference>
<dbReference type="CDD" id="cd07960">
    <property type="entry name" value="Anticodon_Ia_Ile_BEm"/>
    <property type="match status" value="1"/>
</dbReference>
<dbReference type="CDD" id="cd00818">
    <property type="entry name" value="IleRS_core"/>
    <property type="match status" value="1"/>
</dbReference>
<dbReference type="FunFam" id="1.10.730.20:FF:000001">
    <property type="entry name" value="Isoleucine--tRNA ligase"/>
    <property type="match status" value="1"/>
</dbReference>
<dbReference type="FunFam" id="3.40.50.620:FF:000042">
    <property type="entry name" value="Isoleucine--tRNA ligase"/>
    <property type="match status" value="1"/>
</dbReference>
<dbReference type="FunFam" id="3.40.50.620:FF:000048">
    <property type="entry name" value="Isoleucine--tRNA ligase"/>
    <property type="match status" value="1"/>
</dbReference>
<dbReference type="FunFam" id="3.90.740.10:FF:000002">
    <property type="entry name" value="Isoleucine--tRNA ligase"/>
    <property type="match status" value="1"/>
</dbReference>
<dbReference type="Gene3D" id="1.10.730.20">
    <property type="match status" value="1"/>
</dbReference>
<dbReference type="Gene3D" id="3.40.50.620">
    <property type="entry name" value="HUPs"/>
    <property type="match status" value="2"/>
</dbReference>
<dbReference type="Gene3D" id="3.90.740.10">
    <property type="entry name" value="Valyl/Leucyl/Isoleucyl-tRNA synthetase, editing domain"/>
    <property type="match status" value="1"/>
</dbReference>
<dbReference type="HAMAP" id="MF_02002">
    <property type="entry name" value="Ile_tRNA_synth_type1"/>
    <property type="match status" value="1"/>
</dbReference>
<dbReference type="InterPro" id="IPR001412">
    <property type="entry name" value="aa-tRNA-synth_I_CS"/>
</dbReference>
<dbReference type="InterPro" id="IPR002300">
    <property type="entry name" value="aa-tRNA-synth_Ia"/>
</dbReference>
<dbReference type="InterPro" id="IPR033708">
    <property type="entry name" value="Anticodon_Ile_BEm"/>
</dbReference>
<dbReference type="InterPro" id="IPR002301">
    <property type="entry name" value="Ile-tRNA-ligase"/>
</dbReference>
<dbReference type="InterPro" id="IPR023585">
    <property type="entry name" value="Ile-tRNA-ligase_type1"/>
</dbReference>
<dbReference type="InterPro" id="IPR050081">
    <property type="entry name" value="Ile-tRNA_ligase"/>
</dbReference>
<dbReference type="InterPro" id="IPR013155">
    <property type="entry name" value="M/V/L/I-tRNA-synth_anticd-bd"/>
</dbReference>
<dbReference type="InterPro" id="IPR014729">
    <property type="entry name" value="Rossmann-like_a/b/a_fold"/>
</dbReference>
<dbReference type="InterPro" id="IPR009080">
    <property type="entry name" value="tRNAsynth_Ia_anticodon-bd"/>
</dbReference>
<dbReference type="InterPro" id="IPR009008">
    <property type="entry name" value="Val/Leu/Ile-tRNA-synth_edit"/>
</dbReference>
<dbReference type="InterPro" id="IPR010663">
    <property type="entry name" value="Znf_FPG/IleRS"/>
</dbReference>
<dbReference type="NCBIfam" id="TIGR00392">
    <property type="entry name" value="ileS"/>
    <property type="match status" value="1"/>
</dbReference>
<dbReference type="PANTHER" id="PTHR42765:SF1">
    <property type="entry name" value="ISOLEUCINE--TRNA LIGASE, MITOCHONDRIAL"/>
    <property type="match status" value="1"/>
</dbReference>
<dbReference type="PANTHER" id="PTHR42765">
    <property type="entry name" value="SOLEUCYL-TRNA SYNTHETASE"/>
    <property type="match status" value="1"/>
</dbReference>
<dbReference type="Pfam" id="PF08264">
    <property type="entry name" value="Anticodon_1"/>
    <property type="match status" value="1"/>
</dbReference>
<dbReference type="Pfam" id="PF00133">
    <property type="entry name" value="tRNA-synt_1"/>
    <property type="match status" value="1"/>
</dbReference>
<dbReference type="Pfam" id="PF06827">
    <property type="entry name" value="zf-FPG_IleRS"/>
    <property type="match status" value="1"/>
</dbReference>
<dbReference type="PRINTS" id="PR00984">
    <property type="entry name" value="TRNASYNTHILE"/>
</dbReference>
<dbReference type="SUPFAM" id="SSF47323">
    <property type="entry name" value="Anticodon-binding domain of a subclass of class I aminoacyl-tRNA synthetases"/>
    <property type="match status" value="1"/>
</dbReference>
<dbReference type="SUPFAM" id="SSF52374">
    <property type="entry name" value="Nucleotidylyl transferase"/>
    <property type="match status" value="1"/>
</dbReference>
<dbReference type="SUPFAM" id="SSF50677">
    <property type="entry name" value="ValRS/IleRS/LeuRS editing domain"/>
    <property type="match status" value="1"/>
</dbReference>
<dbReference type="PROSITE" id="PS00178">
    <property type="entry name" value="AA_TRNA_LIGASE_I"/>
    <property type="match status" value="1"/>
</dbReference>